<sequence>MPRSQRNDNFIDKTFTIVADILLRVIPTTQREKEAFTYYRDGMSAQSEGEYAEALQNYYKAMRLEIDPYDRSYILYNIGLIHTSNGEHAKALEYYSQALERNPSLPQAFNNMAVICHYRGEQAIQQGDPETSEAWFDQAAEYWKQAIALAPSNYIEAQNWLKITGRLKEWV</sequence>
<keyword id="KW-0150">Chloroplast</keyword>
<keyword id="KW-0472">Membrane</keyword>
<keyword id="KW-0602">Photosynthesis</keyword>
<keyword id="KW-0934">Plastid</keyword>
<keyword id="KW-0677">Repeat</keyword>
<keyword id="KW-0793">Thylakoid</keyword>
<keyword id="KW-0802">TPR repeat</keyword>
<feature type="chain" id="PRO_0000325051" description="Photosystem I assembly protein Ycf3">
    <location>
        <begin position="1"/>
        <end position="171"/>
    </location>
</feature>
<feature type="repeat" description="TPR 1">
    <location>
        <begin position="35"/>
        <end position="68"/>
    </location>
</feature>
<feature type="repeat" description="TPR 2">
    <location>
        <begin position="72"/>
        <end position="105"/>
    </location>
</feature>
<feature type="repeat" description="TPR 3">
    <location>
        <begin position="120"/>
        <end position="153"/>
    </location>
</feature>
<geneLocation type="chloroplast"/>
<reference key="1">
    <citation type="journal article" date="2007" name="Am. Fern J.">
        <title>The complete plastid genome sequence of Angiopteris evecta (G. Forst.) Hoffm. (Marattiaceae).</title>
        <authorList>
            <person name="Roper J.M."/>
            <person name="Hansen S.K."/>
            <person name="Wolf P.G."/>
            <person name="Karol K.G."/>
            <person name="Mandoli D.F."/>
            <person name="Everett K.D.E."/>
            <person name="Kuehl J.V."/>
            <person name="Boore J.L."/>
        </authorList>
    </citation>
    <scope>NUCLEOTIDE SEQUENCE [LARGE SCALE GENOMIC DNA]</scope>
</reference>
<gene>
    <name evidence="1" type="primary">ycf3</name>
</gene>
<dbReference type="EMBL" id="DQ821119">
    <property type="protein sequence ID" value="ABG79601.1"/>
    <property type="molecule type" value="Genomic_DNA"/>
</dbReference>
<dbReference type="RefSeq" id="YP_001023702.1">
    <property type="nucleotide sequence ID" value="NC_008829.1"/>
</dbReference>
<dbReference type="SMR" id="A2T334"/>
<dbReference type="GeneID" id="4788198"/>
<dbReference type="GO" id="GO:0009535">
    <property type="term" value="C:chloroplast thylakoid membrane"/>
    <property type="evidence" value="ECO:0007669"/>
    <property type="project" value="UniProtKB-SubCell"/>
</dbReference>
<dbReference type="GO" id="GO:0015979">
    <property type="term" value="P:photosynthesis"/>
    <property type="evidence" value="ECO:0007669"/>
    <property type="project" value="UniProtKB-UniRule"/>
</dbReference>
<dbReference type="FunFam" id="1.25.40.10:FF:000004">
    <property type="entry name" value="Photosystem I assembly protein Ycf3"/>
    <property type="match status" value="1"/>
</dbReference>
<dbReference type="Gene3D" id="1.25.40.10">
    <property type="entry name" value="Tetratricopeptide repeat domain"/>
    <property type="match status" value="1"/>
</dbReference>
<dbReference type="HAMAP" id="MF_00439">
    <property type="entry name" value="Ycf3"/>
    <property type="match status" value="1"/>
</dbReference>
<dbReference type="InterPro" id="IPR022818">
    <property type="entry name" value="PSI_Ycf3_assembly"/>
</dbReference>
<dbReference type="InterPro" id="IPR011990">
    <property type="entry name" value="TPR-like_helical_dom_sf"/>
</dbReference>
<dbReference type="InterPro" id="IPR019734">
    <property type="entry name" value="TPR_rpt"/>
</dbReference>
<dbReference type="InterPro" id="IPR051685">
    <property type="entry name" value="Ycf3/AcsC/BcsC/TPR_MFPF"/>
</dbReference>
<dbReference type="NCBIfam" id="NF002725">
    <property type="entry name" value="PRK02603.1"/>
    <property type="match status" value="1"/>
</dbReference>
<dbReference type="PANTHER" id="PTHR44943">
    <property type="entry name" value="CELLULOSE SYNTHASE OPERON PROTEIN C"/>
    <property type="match status" value="1"/>
</dbReference>
<dbReference type="PANTHER" id="PTHR44943:SF8">
    <property type="entry name" value="TPR REPEAT-CONTAINING PROTEIN MJ0263"/>
    <property type="match status" value="1"/>
</dbReference>
<dbReference type="Pfam" id="PF00515">
    <property type="entry name" value="TPR_1"/>
    <property type="match status" value="1"/>
</dbReference>
<dbReference type="SMART" id="SM00028">
    <property type="entry name" value="TPR"/>
    <property type="match status" value="3"/>
</dbReference>
<dbReference type="SUPFAM" id="SSF48452">
    <property type="entry name" value="TPR-like"/>
    <property type="match status" value="1"/>
</dbReference>
<dbReference type="PROSITE" id="PS50005">
    <property type="entry name" value="TPR"/>
    <property type="match status" value="3"/>
</dbReference>
<dbReference type="PROSITE" id="PS50293">
    <property type="entry name" value="TPR_REGION"/>
    <property type="match status" value="1"/>
</dbReference>
<evidence type="ECO:0000255" key="1">
    <source>
        <dbReference type="HAMAP-Rule" id="MF_00439"/>
    </source>
</evidence>
<protein>
    <recommendedName>
        <fullName evidence="1">Photosystem I assembly protein Ycf3</fullName>
    </recommendedName>
</protein>
<organism>
    <name type="scientific">Angiopteris evecta</name>
    <name type="common">Mule's foot fern</name>
    <name type="synonym">Polypodium evectum</name>
    <dbReference type="NCBI Taxonomy" id="13825"/>
    <lineage>
        <taxon>Eukaryota</taxon>
        <taxon>Viridiplantae</taxon>
        <taxon>Streptophyta</taxon>
        <taxon>Embryophyta</taxon>
        <taxon>Tracheophyta</taxon>
        <taxon>Polypodiopsida</taxon>
        <taxon>Marattiidae</taxon>
        <taxon>Marattiales</taxon>
        <taxon>Marattiaceae</taxon>
        <taxon>Angiopteris</taxon>
    </lineage>
</organism>
<proteinExistence type="inferred from homology"/>
<accession>A2T334</accession>
<comment type="function">
    <text evidence="1">Essential for the assembly of the photosystem I (PSI) complex. May act as a chaperone-like factor to guide the assembly of the PSI subunits.</text>
</comment>
<comment type="subcellular location">
    <subcellularLocation>
        <location evidence="1">Plastid</location>
        <location evidence="1">Chloroplast thylakoid membrane</location>
        <topology evidence="1">Peripheral membrane protein</topology>
    </subcellularLocation>
</comment>
<comment type="similarity">
    <text evidence="1">Belongs to the Ycf3 family.</text>
</comment>
<name>YCF3_ANGEV</name>